<dbReference type="EMBL" id="AM746676">
    <property type="protein sequence ID" value="CAN98122.1"/>
    <property type="molecule type" value="Genomic_DNA"/>
</dbReference>
<dbReference type="RefSeq" id="WP_012240561.1">
    <property type="nucleotide sequence ID" value="NC_010162.1"/>
</dbReference>
<dbReference type="SMR" id="A9FGH7"/>
<dbReference type="STRING" id="448385.sce7952"/>
<dbReference type="KEGG" id="scl:sce7952"/>
<dbReference type="eggNOG" id="COG0198">
    <property type="taxonomic scope" value="Bacteria"/>
</dbReference>
<dbReference type="HOGENOM" id="CLU_093315_2_0_7"/>
<dbReference type="OrthoDB" id="9807419at2"/>
<dbReference type="BioCyc" id="SCEL448385:SCE_RS40700-MONOMER"/>
<dbReference type="Proteomes" id="UP000002139">
    <property type="component" value="Chromosome"/>
</dbReference>
<dbReference type="GO" id="GO:1990904">
    <property type="term" value="C:ribonucleoprotein complex"/>
    <property type="evidence" value="ECO:0007669"/>
    <property type="project" value="UniProtKB-KW"/>
</dbReference>
<dbReference type="GO" id="GO:0005840">
    <property type="term" value="C:ribosome"/>
    <property type="evidence" value="ECO:0007669"/>
    <property type="project" value="UniProtKB-KW"/>
</dbReference>
<dbReference type="GO" id="GO:0019843">
    <property type="term" value="F:rRNA binding"/>
    <property type="evidence" value="ECO:0007669"/>
    <property type="project" value="UniProtKB-UniRule"/>
</dbReference>
<dbReference type="GO" id="GO:0003735">
    <property type="term" value="F:structural constituent of ribosome"/>
    <property type="evidence" value="ECO:0007669"/>
    <property type="project" value="InterPro"/>
</dbReference>
<dbReference type="GO" id="GO:0006412">
    <property type="term" value="P:translation"/>
    <property type="evidence" value="ECO:0007669"/>
    <property type="project" value="UniProtKB-UniRule"/>
</dbReference>
<dbReference type="CDD" id="cd06089">
    <property type="entry name" value="KOW_RPL26"/>
    <property type="match status" value="1"/>
</dbReference>
<dbReference type="Gene3D" id="2.30.30.30">
    <property type="match status" value="1"/>
</dbReference>
<dbReference type="HAMAP" id="MF_01326_B">
    <property type="entry name" value="Ribosomal_uL24_B"/>
    <property type="match status" value="1"/>
</dbReference>
<dbReference type="InterPro" id="IPR005824">
    <property type="entry name" value="KOW"/>
</dbReference>
<dbReference type="InterPro" id="IPR014722">
    <property type="entry name" value="Rib_uL2_dom2"/>
</dbReference>
<dbReference type="InterPro" id="IPR003256">
    <property type="entry name" value="Ribosomal_uL24"/>
</dbReference>
<dbReference type="InterPro" id="IPR041988">
    <property type="entry name" value="Ribosomal_uL24_KOW"/>
</dbReference>
<dbReference type="InterPro" id="IPR008991">
    <property type="entry name" value="Translation_prot_SH3-like_sf"/>
</dbReference>
<dbReference type="NCBIfam" id="TIGR01079">
    <property type="entry name" value="rplX_bact"/>
    <property type="match status" value="1"/>
</dbReference>
<dbReference type="PANTHER" id="PTHR12903">
    <property type="entry name" value="MITOCHONDRIAL RIBOSOMAL PROTEIN L24"/>
    <property type="match status" value="1"/>
</dbReference>
<dbReference type="Pfam" id="PF00467">
    <property type="entry name" value="KOW"/>
    <property type="match status" value="1"/>
</dbReference>
<dbReference type="Pfam" id="PF17136">
    <property type="entry name" value="ribosomal_L24"/>
    <property type="match status" value="1"/>
</dbReference>
<dbReference type="SMART" id="SM00739">
    <property type="entry name" value="KOW"/>
    <property type="match status" value="1"/>
</dbReference>
<dbReference type="SUPFAM" id="SSF50104">
    <property type="entry name" value="Translation proteins SH3-like domain"/>
    <property type="match status" value="1"/>
</dbReference>
<protein>
    <recommendedName>
        <fullName evidence="1">Large ribosomal subunit protein uL24</fullName>
    </recommendedName>
    <alternativeName>
        <fullName evidence="2">50S ribosomal protein L24</fullName>
    </alternativeName>
</protein>
<evidence type="ECO:0000255" key="1">
    <source>
        <dbReference type="HAMAP-Rule" id="MF_01326"/>
    </source>
</evidence>
<evidence type="ECO:0000305" key="2"/>
<proteinExistence type="inferred from homology"/>
<sequence length="105" mass="11288">MKRLRVGDLVQVISGKEEGKQGRITKILADEDRVVVEGLNTVTRHQRPTPRNQEGGKITKEAPIHASKVMPVDPATGKPTRVKVRVGEDGKKTRVGKSGSAIGVG</sequence>
<accession>A9FGH7</accession>
<name>RL24_SORC5</name>
<reference key="1">
    <citation type="journal article" date="2007" name="Nat. Biotechnol.">
        <title>Complete genome sequence of the myxobacterium Sorangium cellulosum.</title>
        <authorList>
            <person name="Schneiker S."/>
            <person name="Perlova O."/>
            <person name="Kaiser O."/>
            <person name="Gerth K."/>
            <person name="Alici A."/>
            <person name="Altmeyer M.O."/>
            <person name="Bartels D."/>
            <person name="Bekel T."/>
            <person name="Beyer S."/>
            <person name="Bode E."/>
            <person name="Bode H.B."/>
            <person name="Bolten C.J."/>
            <person name="Choudhuri J.V."/>
            <person name="Doss S."/>
            <person name="Elnakady Y.A."/>
            <person name="Frank B."/>
            <person name="Gaigalat L."/>
            <person name="Goesmann A."/>
            <person name="Groeger C."/>
            <person name="Gross F."/>
            <person name="Jelsbak L."/>
            <person name="Jelsbak L."/>
            <person name="Kalinowski J."/>
            <person name="Kegler C."/>
            <person name="Knauber T."/>
            <person name="Konietzny S."/>
            <person name="Kopp M."/>
            <person name="Krause L."/>
            <person name="Krug D."/>
            <person name="Linke B."/>
            <person name="Mahmud T."/>
            <person name="Martinez-Arias R."/>
            <person name="McHardy A.C."/>
            <person name="Merai M."/>
            <person name="Meyer F."/>
            <person name="Mormann S."/>
            <person name="Munoz-Dorado J."/>
            <person name="Perez J."/>
            <person name="Pradella S."/>
            <person name="Rachid S."/>
            <person name="Raddatz G."/>
            <person name="Rosenau F."/>
            <person name="Rueckert C."/>
            <person name="Sasse F."/>
            <person name="Scharfe M."/>
            <person name="Schuster S.C."/>
            <person name="Suen G."/>
            <person name="Treuner-Lange A."/>
            <person name="Velicer G.J."/>
            <person name="Vorholter F.-J."/>
            <person name="Weissman K.J."/>
            <person name="Welch R.D."/>
            <person name="Wenzel S.C."/>
            <person name="Whitworth D.E."/>
            <person name="Wilhelm S."/>
            <person name="Wittmann C."/>
            <person name="Bloecker H."/>
            <person name="Puehler A."/>
            <person name="Mueller R."/>
        </authorList>
    </citation>
    <scope>NUCLEOTIDE SEQUENCE [LARGE SCALE GENOMIC DNA]</scope>
    <source>
        <strain>So ce56</strain>
    </source>
</reference>
<feature type="chain" id="PRO_1000086497" description="Large ribosomal subunit protein uL24">
    <location>
        <begin position="1"/>
        <end position="105"/>
    </location>
</feature>
<organism>
    <name type="scientific">Sorangium cellulosum (strain So ce56)</name>
    <name type="common">Polyangium cellulosum (strain So ce56)</name>
    <dbReference type="NCBI Taxonomy" id="448385"/>
    <lineage>
        <taxon>Bacteria</taxon>
        <taxon>Pseudomonadati</taxon>
        <taxon>Myxococcota</taxon>
        <taxon>Polyangia</taxon>
        <taxon>Polyangiales</taxon>
        <taxon>Polyangiaceae</taxon>
        <taxon>Sorangium</taxon>
    </lineage>
</organism>
<keyword id="KW-1185">Reference proteome</keyword>
<keyword id="KW-0687">Ribonucleoprotein</keyword>
<keyword id="KW-0689">Ribosomal protein</keyword>
<keyword id="KW-0694">RNA-binding</keyword>
<keyword id="KW-0699">rRNA-binding</keyword>
<comment type="function">
    <text evidence="1">One of two assembly initiator proteins, it binds directly to the 5'-end of the 23S rRNA, where it nucleates assembly of the 50S subunit.</text>
</comment>
<comment type="function">
    <text evidence="1">One of the proteins that surrounds the polypeptide exit tunnel on the outside of the subunit.</text>
</comment>
<comment type="subunit">
    <text evidence="1">Part of the 50S ribosomal subunit.</text>
</comment>
<comment type="similarity">
    <text evidence="1">Belongs to the universal ribosomal protein uL24 family.</text>
</comment>
<gene>
    <name evidence="1" type="primary">rplX</name>
    <name type="ordered locus">sce7952</name>
</gene>